<protein>
    <recommendedName>
        <fullName evidence="1">Glutamine--fructose-6-phosphate aminotransferase [isomerizing]</fullName>
        <ecNumber evidence="1 2">2.6.1.16</ecNumber>
    </recommendedName>
    <alternativeName>
        <fullName evidence="1">D-fructose-6-phosphate amidotransferase</fullName>
    </alternativeName>
    <alternativeName>
        <fullName evidence="1">GFAT</fullName>
    </alternativeName>
    <alternativeName>
        <fullName evidence="1">Glucosamine-6-phosphate synthase</fullName>
    </alternativeName>
    <alternativeName>
        <fullName evidence="3">Glutamine:fructose-6-phosphate amidotransferase</fullName>
    </alternativeName>
    <alternativeName>
        <fullName evidence="1">Hexosephosphate aminotransferase</fullName>
    </alternativeName>
    <alternativeName>
        <fullName evidence="1">L-glutamine--D-fructose-6-phosphate amidotransferase</fullName>
    </alternativeName>
</protein>
<sequence length="589" mass="65497">MCGIIGIVSLRESKKLAEMTVSALKRLEYRGYDSVGVASISSNGLEIRKAKGKVEEVVLQKKIEEMEGYVFLGHTRWATHGPPTDYNAHPHTDCNGNIAVVHNGTIKNYKELREELESLGHKFKSETDTEVIPHLIEEFMKRGMDPFQAFKSAIKSLEGSYAVLAVINGERRIFFAKKDNPLIIGLGEGQNFIASDIPAFLPYTKRILVIRDDELGFITPETVYLEDKDGNVINIKERIRSVDWDIETASKEGYPHFMIKEIHESPRAVKETIDSLMSDIDLVEKVIEEIKNAERVIVIGAGTSYHAGLYFSIELNRLGINSLPVIASEYYNVRSKKGDLVFAISQSGETIDVLQGIRMMRNSGAKIISLTNVIESAIARESDYKIYMRAGPEIGVAATKTFTTQLASILFILSVLKKENLKKMEKAPDIVRDTISQVEGLTKKIGEELAKKSNIYYLGRGLSLPLAMEGALKIKEIAYVHAEAYPAGESKHGPISLVEKGFPVVIINDGELTELLQNNLMEMKARGARIYAVSVNKKMKDADVEIELQSEIPVLSIAPVIQLIAYYAAVTKGYDPDKPRNLAKTVTVE</sequence>
<comment type="function">
    <text evidence="1 2">Catalyzes the first step in hexosamine metabolism, converting fructose-6P into glucosamine-6P using glutamine as a nitrogen source.</text>
</comment>
<comment type="catalytic activity">
    <reaction evidence="1 2">
        <text>D-fructose 6-phosphate + L-glutamine = D-glucosamine 6-phosphate + L-glutamate</text>
        <dbReference type="Rhea" id="RHEA:13237"/>
        <dbReference type="ChEBI" id="CHEBI:29985"/>
        <dbReference type="ChEBI" id="CHEBI:58359"/>
        <dbReference type="ChEBI" id="CHEBI:58725"/>
        <dbReference type="ChEBI" id="CHEBI:61527"/>
        <dbReference type="EC" id="2.6.1.16"/>
    </reaction>
</comment>
<comment type="subunit">
    <text evidence="1">Homodimer.</text>
</comment>
<comment type="subcellular location">
    <subcellularLocation>
        <location evidence="1">Cytoplasm</location>
    </subcellularLocation>
</comment>
<accession>F9VPA4</accession>
<evidence type="ECO:0000255" key="1">
    <source>
        <dbReference type="HAMAP-Rule" id="MF_00164"/>
    </source>
</evidence>
<evidence type="ECO:0000269" key="2">
    <source>
    </source>
</evidence>
<evidence type="ECO:0000303" key="3">
    <source>
    </source>
</evidence>
<evidence type="ECO:0000312" key="4">
    <source>
        <dbReference type="EMBL" id="BAK54751.1"/>
    </source>
</evidence>
<keyword id="KW-0032">Aminotransferase</keyword>
<keyword id="KW-0963">Cytoplasm</keyword>
<keyword id="KW-0315">Glutamine amidotransferase</keyword>
<keyword id="KW-1185">Reference proteome</keyword>
<keyword id="KW-0677">Repeat</keyword>
<keyword id="KW-0808">Transferase</keyword>
<feature type="initiator methionine" description="Removed" evidence="1">
    <location>
        <position position="1"/>
    </location>
</feature>
<feature type="chain" id="PRO_0000448049" description="Glutamine--fructose-6-phosphate aminotransferase [isomerizing]">
    <location>
        <begin position="2"/>
        <end position="589"/>
    </location>
</feature>
<feature type="domain" description="Glutamine amidotransferase type-2" evidence="1">
    <location>
        <begin position="2"/>
        <end position="221"/>
    </location>
</feature>
<feature type="domain" description="SIS 1" evidence="1">
    <location>
        <begin position="286"/>
        <end position="426"/>
    </location>
</feature>
<feature type="domain" description="SIS 2" evidence="1">
    <location>
        <begin position="445"/>
        <end position="579"/>
    </location>
</feature>
<feature type="active site" description="Nucleophile; for GATase activity" evidence="1">
    <location>
        <position position="2"/>
    </location>
</feature>
<feature type="active site" description="For Fru-6P isomerization activity" evidence="1">
    <location>
        <position position="584"/>
    </location>
</feature>
<organism>
    <name type="scientific">Sulfurisphaera tokodaii (strain DSM 16993 / JCM 10545 / NBRC 100140 / 7)</name>
    <name type="common">Sulfolobus tokodaii</name>
    <dbReference type="NCBI Taxonomy" id="273063"/>
    <lineage>
        <taxon>Archaea</taxon>
        <taxon>Thermoproteota</taxon>
        <taxon>Thermoprotei</taxon>
        <taxon>Sulfolobales</taxon>
        <taxon>Sulfolobaceae</taxon>
        <taxon>Sulfurisphaera</taxon>
    </lineage>
</organism>
<gene>
    <name evidence="1" type="primary">glmS</name>
    <name evidence="4" type="ordered locus">STK_21860</name>
    <name evidence="3" type="ORF">ST2186</name>
</gene>
<dbReference type="EC" id="2.6.1.16" evidence="1 2"/>
<dbReference type="EMBL" id="BA000023">
    <property type="protein sequence ID" value="BAK54751.1"/>
    <property type="molecule type" value="Genomic_DNA"/>
</dbReference>
<dbReference type="RefSeq" id="WP_052847024.1">
    <property type="nucleotide sequence ID" value="NC_003106.2"/>
</dbReference>
<dbReference type="SMR" id="F9VPA4"/>
<dbReference type="STRING" id="273063.STK_21860"/>
<dbReference type="GeneID" id="1460260"/>
<dbReference type="KEGG" id="sto:STK_21860"/>
<dbReference type="PATRIC" id="fig|273063.9.peg.2482"/>
<dbReference type="eggNOG" id="arCOG00057">
    <property type="taxonomic scope" value="Archaea"/>
</dbReference>
<dbReference type="OrthoDB" id="372195at2157"/>
<dbReference type="BioCyc" id="MetaCyc:MONOMER-20591"/>
<dbReference type="Proteomes" id="UP000001015">
    <property type="component" value="Chromosome"/>
</dbReference>
<dbReference type="GO" id="GO:0005737">
    <property type="term" value="C:cytoplasm"/>
    <property type="evidence" value="ECO:0007669"/>
    <property type="project" value="UniProtKB-SubCell"/>
</dbReference>
<dbReference type="GO" id="GO:0097367">
    <property type="term" value="F:carbohydrate derivative binding"/>
    <property type="evidence" value="ECO:0007669"/>
    <property type="project" value="InterPro"/>
</dbReference>
<dbReference type="GO" id="GO:0004360">
    <property type="term" value="F:glutamine-fructose-6-phosphate transaminase (isomerizing) activity"/>
    <property type="evidence" value="ECO:0007669"/>
    <property type="project" value="UniProtKB-UniRule"/>
</dbReference>
<dbReference type="GO" id="GO:0005975">
    <property type="term" value="P:carbohydrate metabolic process"/>
    <property type="evidence" value="ECO:0007669"/>
    <property type="project" value="UniProtKB-UniRule"/>
</dbReference>
<dbReference type="GO" id="GO:0006002">
    <property type="term" value="P:fructose 6-phosphate metabolic process"/>
    <property type="evidence" value="ECO:0007669"/>
    <property type="project" value="TreeGrafter"/>
</dbReference>
<dbReference type="GO" id="GO:0006487">
    <property type="term" value="P:protein N-linked glycosylation"/>
    <property type="evidence" value="ECO:0007669"/>
    <property type="project" value="TreeGrafter"/>
</dbReference>
<dbReference type="GO" id="GO:0006047">
    <property type="term" value="P:UDP-N-acetylglucosamine metabolic process"/>
    <property type="evidence" value="ECO:0007669"/>
    <property type="project" value="TreeGrafter"/>
</dbReference>
<dbReference type="CDD" id="cd00714">
    <property type="entry name" value="GFAT"/>
    <property type="match status" value="1"/>
</dbReference>
<dbReference type="CDD" id="cd05008">
    <property type="entry name" value="SIS_GlmS_GlmD_1"/>
    <property type="match status" value="1"/>
</dbReference>
<dbReference type="CDD" id="cd05009">
    <property type="entry name" value="SIS_GlmS_GlmD_2"/>
    <property type="match status" value="1"/>
</dbReference>
<dbReference type="FunFam" id="3.60.20.10:FF:000006">
    <property type="entry name" value="Glutamine--fructose-6-phosphate aminotransferase [isomerizing]"/>
    <property type="match status" value="1"/>
</dbReference>
<dbReference type="Gene3D" id="3.40.50.10490">
    <property type="entry name" value="Glucose-6-phosphate isomerase like protein, domain 1"/>
    <property type="match status" value="2"/>
</dbReference>
<dbReference type="Gene3D" id="3.60.20.10">
    <property type="entry name" value="Glutamine Phosphoribosylpyrophosphate, subunit 1, domain 1"/>
    <property type="match status" value="1"/>
</dbReference>
<dbReference type="HAMAP" id="MF_00164">
    <property type="entry name" value="GlmS"/>
    <property type="match status" value="1"/>
</dbReference>
<dbReference type="InterPro" id="IPR017932">
    <property type="entry name" value="GATase_2_dom"/>
</dbReference>
<dbReference type="InterPro" id="IPR005855">
    <property type="entry name" value="GFAT"/>
</dbReference>
<dbReference type="InterPro" id="IPR047084">
    <property type="entry name" value="GFAT_N"/>
</dbReference>
<dbReference type="InterPro" id="IPR035466">
    <property type="entry name" value="GlmS/AgaS_SIS"/>
</dbReference>
<dbReference type="InterPro" id="IPR035490">
    <property type="entry name" value="GlmS/FrlB_SIS"/>
</dbReference>
<dbReference type="InterPro" id="IPR029055">
    <property type="entry name" value="Ntn_hydrolases_N"/>
</dbReference>
<dbReference type="InterPro" id="IPR001347">
    <property type="entry name" value="SIS_dom"/>
</dbReference>
<dbReference type="InterPro" id="IPR046348">
    <property type="entry name" value="SIS_dom_sf"/>
</dbReference>
<dbReference type="NCBIfam" id="TIGR01135">
    <property type="entry name" value="glmS"/>
    <property type="match status" value="1"/>
</dbReference>
<dbReference type="NCBIfam" id="NF001484">
    <property type="entry name" value="PRK00331.1"/>
    <property type="match status" value="1"/>
</dbReference>
<dbReference type="PANTHER" id="PTHR10937">
    <property type="entry name" value="GLUCOSAMINE--FRUCTOSE-6-PHOSPHATE AMINOTRANSFERASE, ISOMERIZING"/>
    <property type="match status" value="1"/>
</dbReference>
<dbReference type="PANTHER" id="PTHR10937:SF0">
    <property type="entry name" value="GLUTAMINE--FRUCTOSE-6-PHOSPHATE TRANSAMINASE (ISOMERIZING)"/>
    <property type="match status" value="1"/>
</dbReference>
<dbReference type="Pfam" id="PF13522">
    <property type="entry name" value="GATase_6"/>
    <property type="match status" value="1"/>
</dbReference>
<dbReference type="Pfam" id="PF01380">
    <property type="entry name" value="SIS"/>
    <property type="match status" value="2"/>
</dbReference>
<dbReference type="SUPFAM" id="SSF56235">
    <property type="entry name" value="N-terminal nucleophile aminohydrolases (Ntn hydrolases)"/>
    <property type="match status" value="1"/>
</dbReference>
<dbReference type="SUPFAM" id="SSF53697">
    <property type="entry name" value="SIS domain"/>
    <property type="match status" value="1"/>
</dbReference>
<dbReference type="PROSITE" id="PS51278">
    <property type="entry name" value="GATASE_TYPE_2"/>
    <property type="match status" value="1"/>
</dbReference>
<dbReference type="PROSITE" id="PS51464">
    <property type="entry name" value="SIS"/>
    <property type="match status" value="2"/>
</dbReference>
<name>GLMS_SULTO</name>
<reference key="1">
    <citation type="journal article" date="2001" name="DNA Res.">
        <title>Complete genome sequence of an aerobic thermoacidophilic Crenarchaeon, Sulfolobus tokodaii strain7.</title>
        <authorList>
            <person name="Kawarabayasi Y."/>
            <person name="Hino Y."/>
            <person name="Horikawa H."/>
            <person name="Jin-no K."/>
            <person name="Takahashi M."/>
            <person name="Sekine M."/>
            <person name="Baba S."/>
            <person name="Ankai A."/>
            <person name="Kosugi H."/>
            <person name="Hosoyama A."/>
            <person name="Fukui S."/>
            <person name="Nagai Y."/>
            <person name="Nishijima K."/>
            <person name="Otsuka R."/>
            <person name="Nakazawa H."/>
            <person name="Takamiya M."/>
            <person name="Kato Y."/>
            <person name="Yoshizawa T."/>
            <person name="Tanaka T."/>
            <person name="Kudoh Y."/>
            <person name="Yamazaki J."/>
            <person name="Kushida N."/>
            <person name="Oguchi A."/>
            <person name="Aoki K."/>
            <person name="Masuda S."/>
            <person name="Yanagii M."/>
            <person name="Nishimura M."/>
            <person name="Yamagishi A."/>
            <person name="Oshima T."/>
            <person name="Kikuchi H."/>
        </authorList>
    </citation>
    <scope>NUCLEOTIDE SEQUENCE [LARGE SCALE GENOMIC DNA]</scope>
    <source>
        <strain>DSM 16993 / JCM 10545 / NBRC 100140 / 7</strain>
    </source>
</reference>
<reference key="2">
    <citation type="journal article" date="2018" name="J. Bacteriol.">
        <title>Identification of a direct biosynthetic pathway for UDP-N-acetylgalactosamine from glucosamine-6-phosphate in thermophilic crenarchaeon Sulfolobus tokodaii.</title>
        <authorList>
            <person name="Dadashipour M."/>
            <person name="Iwamoto M."/>
            <person name="Hossain M.M."/>
            <person name="Akutsu J.I."/>
            <person name="Zhang Z."/>
            <person name="Kawarabayasi Y."/>
        </authorList>
    </citation>
    <scope>FUNCTION</scope>
    <scope>CATALYTIC ACTIVITY</scope>
    <source>
        <strain>DSM 16993 / JCM 10545 / NBRC 100140 / 7</strain>
    </source>
</reference>
<proteinExistence type="evidence at protein level"/>